<reference key="1">
    <citation type="journal article" date="1995" name="DNA Seq.">
        <title>Cloning and sequencing of the streptokinase gene from Streptococcus pyogenes (CIP 56.57).</title>
        <authorList>
            <person name="Ball M.M."/>
            <person name="Puig J."/>
            <person name="Iborra F."/>
        </authorList>
    </citation>
    <scope>NUCLEOTIDE SEQUENCE [GENOMIC DNA]</scope>
    <source>
        <strain>CIP 56.57</strain>
    </source>
</reference>
<organism>
    <name type="scientific">Streptococcus pyogenes</name>
    <dbReference type="NCBI Taxonomy" id="1314"/>
    <lineage>
        <taxon>Bacteria</taxon>
        <taxon>Bacillati</taxon>
        <taxon>Bacillota</taxon>
        <taxon>Bacilli</taxon>
        <taxon>Lactobacillales</taxon>
        <taxon>Streptococcaceae</taxon>
        <taxon>Streptococcus</taxon>
    </lineage>
</organism>
<name>STRQ_STRPY</name>
<evidence type="ECO:0000250" key="1"/>
<evidence type="ECO:0000256" key="2">
    <source>
        <dbReference type="SAM" id="MobiDB-lite"/>
    </source>
</evidence>
<dbReference type="EMBL" id="Z48617">
    <property type="protein sequence ID" value="CAA88532.1"/>
    <property type="molecule type" value="Genomic_DNA"/>
</dbReference>
<dbReference type="RefSeq" id="WP_020837796.1">
    <property type="nucleotide sequence ID" value="NZ_UHHF01000002.1"/>
</dbReference>
<dbReference type="SMR" id="P96471"/>
<dbReference type="STRING" id="1314.SD89_08825"/>
<dbReference type="BindingDB" id="P96471"/>
<dbReference type="ChEMBL" id="CHEMBL2346485"/>
<dbReference type="GO" id="GO:0005576">
    <property type="term" value="C:extracellular region"/>
    <property type="evidence" value="ECO:0007669"/>
    <property type="project" value="InterPro"/>
</dbReference>
<dbReference type="Gene3D" id="3.10.20.150">
    <property type="match status" value="1"/>
</dbReference>
<dbReference type="Gene3D" id="3.10.20.180">
    <property type="match status" value="2"/>
</dbReference>
<dbReference type="InterPro" id="IPR004093">
    <property type="entry name" value="SAK"/>
</dbReference>
<dbReference type="InterPro" id="IPR036120">
    <property type="entry name" value="SAK/SK_sf"/>
</dbReference>
<dbReference type="InterPro" id="IPR008124">
    <property type="entry name" value="SK"/>
</dbReference>
<dbReference type="Pfam" id="PF02821">
    <property type="entry name" value="Staphylokinase"/>
    <property type="match status" value="2"/>
</dbReference>
<dbReference type="PRINTS" id="PR01753">
    <property type="entry name" value="STREPKINASE"/>
</dbReference>
<dbReference type="SUPFAM" id="SSF54328">
    <property type="entry name" value="Staphylokinase/streptokinase"/>
    <property type="match status" value="3"/>
</dbReference>
<protein>
    <recommendedName>
        <fullName>Streptokinase</fullName>
    </recommendedName>
</protein>
<proteinExistence type="inferred from homology"/>
<gene>
    <name type="primary">ska</name>
</gene>
<sequence length="440" mass="49910">MKNYLSFGMFALLFALTFGTVKPVQAIAGPEWLLGRPSVNNSQLVVSVAGTVEGTNQEISLKFFEIDLTSRPAQGGKTEQGLRPKSKPLATDKGAMSHKLEKADLLKAIQEQLIANVHSNDGYFEVIDFASDATITDRNGKVYFADRDDSVTLPTQPVQEFLLSGHVRVRPYRPKAVHNSAERVNVNYEVSFVSETGNLDFTPSLKEQYHLTTLAVGDSLSSQELAAIAQFILSKKHPDYIITKRDSSIVTHDNDIFRTILPMDQEFTYHIKDREQAYKANSKTGIEEKTNNTDLISEKYYILKKGEKPYDPFDRSHLKLFTIKYVDVDTKALLKSEQLLTASERNLDFRDLYDPRDKAKLLYNNLDAFGIMGYTLTGKVEDNHDDTNRIITVYMGKRPEGENASYHLAYDKDRYTEEEREVYSYLRDTGTPIPDNPKDK</sequence>
<accession>P96471</accession>
<keyword id="KW-0617">Plasminogen activation</keyword>
<keyword id="KW-0732">Signal</keyword>
<keyword id="KW-0843">Virulence</keyword>
<feature type="signal peptide" evidence="1">
    <location>
        <begin position="1"/>
        <end position="26"/>
    </location>
</feature>
<feature type="chain" id="PRO_0000022431" description="Streptokinase">
    <location>
        <begin position="27"/>
        <end position="440"/>
    </location>
</feature>
<feature type="region of interest" description="Disordered" evidence="2">
    <location>
        <begin position="72"/>
        <end position="94"/>
    </location>
</feature>
<comment type="function">
    <text evidence="1">This protein is not a protease, but it activates plasminogen by complexing with it. As a potential virulence factor, it is thought to prevent the formation of effective fibrin barriers around the site of infection, thereby contributing to the invasiveness of the cells (By similarity).</text>
</comment>